<dbReference type="EMBL" id="AE000657">
    <property type="protein sequence ID" value="AAC06402.1"/>
    <property type="molecule type" value="Genomic_DNA"/>
</dbReference>
<dbReference type="PIR" id="A70300">
    <property type="entry name" value="A70300"/>
</dbReference>
<dbReference type="RefSeq" id="NP_212986.1">
    <property type="nucleotide sequence ID" value="NC_000918.1"/>
</dbReference>
<dbReference type="RefSeq" id="WP_010879924.1">
    <property type="nucleotide sequence ID" value="NC_000918.1"/>
</dbReference>
<dbReference type="SMR" id="O66428"/>
<dbReference type="FunCoup" id="O66428">
    <property type="interactions" value="472"/>
</dbReference>
<dbReference type="STRING" id="224324.aq_001"/>
<dbReference type="EnsemblBacteria" id="AAC06402">
    <property type="protein sequence ID" value="AAC06402"/>
    <property type="gene ID" value="aq_001"/>
</dbReference>
<dbReference type="KEGG" id="aae:aq_001"/>
<dbReference type="PATRIC" id="fig|224324.8.peg.1"/>
<dbReference type="eggNOG" id="COG0480">
    <property type="taxonomic scope" value="Bacteria"/>
</dbReference>
<dbReference type="HOGENOM" id="CLU_002794_4_1_0"/>
<dbReference type="InParanoid" id="O66428"/>
<dbReference type="OrthoDB" id="9804431at2"/>
<dbReference type="Proteomes" id="UP000000798">
    <property type="component" value="Chromosome"/>
</dbReference>
<dbReference type="GO" id="GO:0005737">
    <property type="term" value="C:cytoplasm"/>
    <property type="evidence" value="ECO:0007669"/>
    <property type="project" value="UniProtKB-SubCell"/>
</dbReference>
<dbReference type="GO" id="GO:0005525">
    <property type="term" value="F:GTP binding"/>
    <property type="evidence" value="ECO:0007669"/>
    <property type="project" value="UniProtKB-UniRule"/>
</dbReference>
<dbReference type="GO" id="GO:0003924">
    <property type="term" value="F:GTPase activity"/>
    <property type="evidence" value="ECO:0007669"/>
    <property type="project" value="InterPro"/>
</dbReference>
<dbReference type="GO" id="GO:0003746">
    <property type="term" value="F:translation elongation factor activity"/>
    <property type="evidence" value="ECO:0007669"/>
    <property type="project" value="UniProtKB-UniRule"/>
</dbReference>
<dbReference type="GO" id="GO:0032790">
    <property type="term" value="P:ribosome disassembly"/>
    <property type="evidence" value="ECO:0000318"/>
    <property type="project" value="GO_Central"/>
</dbReference>
<dbReference type="CDD" id="cd01886">
    <property type="entry name" value="EF-G"/>
    <property type="match status" value="1"/>
</dbReference>
<dbReference type="CDD" id="cd16262">
    <property type="entry name" value="EFG_III"/>
    <property type="match status" value="1"/>
</dbReference>
<dbReference type="CDD" id="cd01434">
    <property type="entry name" value="EFG_mtEFG1_IV"/>
    <property type="match status" value="1"/>
</dbReference>
<dbReference type="CDD" id="cd03713">
    <property type="entry name" value="EFG_mtEFG_C"/>
    <property type="match status" value="1"/>
</dbReference>
<dbReference type="CDD" id="cd04088">
    <property type="entry name" value="EFG_mtEFG_II"/>
    <property type="match status" value="1"/>
</dbReference>
<dbReference type="FunFam" id="2.40.30.10:FF:000006">
    <property type="entry name" value="Elongation factor G"/>
    <property type="match status" value="1"/>
</dbReference>
<dbReference type="FunFam" id="3.30.230.10:FF:000003">
    <property type="entry name" value="Elongation factor G"/>
    <property type="match status" value="1"/>
</dbReference>
<dbReference type="FunFam" id="3.30.70.240:FF:000001">
    <property type="entry name" value="Elongation factor G"/>
    <property type="match status" value="1"/>
</dbReference>
<dbReference type="FunFam" id="3.30.70.870:FF:000001">
    <property type="entry name" value="Elongation factor G"/>
    <property type="match status" value="1"/>
</dbReference>
<dbReference type="FunFam" id="3.40.50.300:FF:000029">
    <property type="entry name" value="Elongation factor G"/>
    <property type="match status" value="1"/>
</dbReference>
<dbReference type="Gene3D" id="3.30.230.10">
    <property type="match status" value="1"/>
</dbReference>
<dbReference type="Gene3D" id="3.30.70.240">
    <property type="match status" value="1"/>
</dbReference>
<dbReference type="Gene3D" id="3.30.70.870">
    <property type="entry name" value="Elongation Factor G (Translational Gtpase), domain 3"/>
    <property type="match status" value="1"/>
</dbReference>
<dbReference type="Gene3D" id="3.40.50.300">
    <property type="entry name" value="P-loop containing nucleotide triphosphate hydrolases"/>
    <property type="match status" value="1"/>
</dbReference>
<dbReference type="Gene3D" id="2.40.30.10">
    <property type="entry name" value="Translation factors"/>
    <property type="match status" value="1"/>
</dbReference>
<dbReference type="HAMAP" id="MF_00054_B">
    <property type="entry name" value="EF_G_EF_2_B"/>
    <property type="match status" value="1"/>
</dbReference>
<dbReference type="InterPro" id="IPR053905">
    <property type="entry name" value="EF-G-like_DII"/>
</dbReference>
<dbReference type="InterPro" id="IPR041095">
    <property type="entry name" value="EFG_II"/>
</dbReference>
<dbReference type="InterPro" id="IPR009022">
    <property type="entry name" value="EFG_III"/>
</dbReference>
<dbReference type="InterPro" id="IPR035647">
    <property type="entry name" value="EFG_III/V"/>
</dbReference>
<dbReference type="InterPro" id="IPR047872">
    <property type="entry name" value="EFG_IV"/>
</dbReference>
<dbReference type="InterPro" id="IPR035649">
    <property type="entry name" value="EFG_V"/>
</dbReference>
<dbReference type="InterPro" id="IPR000640">
    <property type="entry name" value="EFG_V-like"/>
</dbReference>
<dbReference type="InterPro" id="IPR031157">
    <property type="entry name" value="G_TR_CS"/>
</dbReference>
<dbReference type="InterPro" id="IPR027417">
    <property type="entry name" value="P-loop_NTPase"/>
</dbReference>
<dbReference type="InterPro" id="IPR020568">
    <property type="entry name" value="Ribosomal_Su5_D2-typ_SF"/>
</dbReference>
<dbReference type="InterPro" id="IPR014721">
    <property type="entry name" value="Ribsml_uS5_D2-typ_fold_subgr"/>
</dbReference>
<dbReference type="InterPro" id="IPR005225">
    <property type="entry name" value="Small_GTP-bd"/>
</dbReference>
<dbReference type="InterPro" id="IPR000795">
    <property type="entry name" value="T_Tr_GTP-bd_dom"/>
</dbReference>
<dbReference type="InterPro" id="IPR009000">
    <property type="entry name" value="Transl_B-barrel_sf"/>
</dbReference>
<dbReference type="InterPro" id="IPR004540">
    <property type="entry name" value="Transl_elong_EFG/EF2"/>
</dbReference>
<dbReference type="InterPro" id="IPR005517">
    <property type="entry name" value="Transl_elong_EFG/EF2_IV"/>
</dbReference>
<dbReference type="NCBIfam" id="TIGR00484">
    <property type="entry name" value="EF-G"/>
    <property type="match status" value="1"/>
</dbReference>
<dbReference type="NCBIfam" id="NF009379">
    <property type="entry name" value="PRK12740.1-3"/>
    <property type="match status" value="1"/>
</dbReference>
<dbReference type="NCBIfam" id="NF009381">
    <property type="entry name" value="PRK12740.1-5"/>
    <property type="match status" value="1"/>
</dbReference>
<dbReference type="NCBIfam" id="NF009891">
    <property type="entry name" value="PRK13351.1-1"/>
    <property type="match status" value="1"/>
</dbReference>
<dbReference type="NCBIfam" id="TIGR00231">
    <property type="entry name" value="small_GTP"/>
    <property type="match status" value="1"/>
</dbReference>
<dbReference type="PANTHER" id="PTHR43261:SF1">
    <property type="entry name" value="RIBOSOME-RELEASING FACTOR 2, MITOCHONDRIAL"/>
    <property type="match status" value="1"/>
</dbReference>
<dbReference type="PANTHER" id="PTHR43261">
    <property type="entry name" value="TRANSLATION ELONGATION FACTOR G-RELATED"/>
    <property type="match status" value="1"/>
</dbReference>
<dbReference type="Pfam" id="PF22042">
    <property type="entry name" value="EF-G_D2"/>
    <property type="match status" value="1"/>
</dbReference>
<dbReference type="Pfam" id="PF00679">
    <property type="entry name" value="EFG_C"/>
    <property type="match status" value="1"/>
</dbReference>
<dbReference type="Pfam" id="PF14492">
    <property type="entry name" value="EFG_III"/>
    <property type="match status" value="1"/>
</dbReference>
<dbReference type="Pfam" id="PF03764">
    <property type="entry name" value="EFG_IV"/>
    <property type="match status" value="1"/>
</dbReference>
<dbReference type="Pfam" id="PF00009">
    <property type="entry name" value="GTP_EFTU"/>
    <property type="match status" value="1"/>
</dbReference>
<dbReference type="PRINTS" id="PR00315">
    <property type="entry name" value="ELONGATNFCT"/>
</dbReference>
<dbReference type="SMART" id="SM00838">
    <property type="entry name" value="EFG_C"/>
    <property type="match status" value="1"/>
</dbReference>
<dbReference type="SMART" id="SM00889">
    <property type="entry name" value="EFG_IV"/>
    <property type="match status" value="1"/>
</dbReference>
<dbReference type="SUPFAM" id="SSF54980">
    <property type="entry name" value="EF-G C-terminal domain-like"/>
    <property type="match status" value="2"/>
</dbReference>
<dbReference type="SUPFAM" id="SSF52540">
    <property type="entry name" value="P-loop containing nucleoside triphosphate hydrolases"/>
    <property type="match status" value="1"/>
</dbReference>
<dbReference type="SUPFAM" id="SSF54211">
    <property type="entry name" value="Ribosomal protein S5 domain 2-like"/>
    <property type="match status" value="1"/>
</dbReference>
<dbReference type="SUPFAM" id="SSF50447">
    <property type="entry name" value="Translation proteins"/>
    <property type="match status" value="1"/>
</dbReference>
<dbReference type="PROSITE" id="PS00301">
    <property type="entry name" value="G_TR_1"/>
    <property type="match status" value="1"/>
</dbReference>
<dbReference type="PROSITE" id="PS51722">
    <property type="entry name" value="G_TR_2"/>
    <property type="match status" value="1"/>
</dbReference>
<protein>
    <recommendedName>
        <fullName>Elongation factor G</fullName>
        <shortName>EF-G</shortName>
    </recommendedName>
</protein>
<proteinExistence type="inferred from homology"/>
<accession>O66428</accession>
<keyword id="KW-0963">Cytoplasm</keyword>
<keyword id="KW-0251">Elongation factor</keyword>
<keyword id="KW-0342">GTP-binding</keyword>
<keyword id="KW-0547">Nucleotide-binding</keyword>
<keyword id="KW-0648">Protein biosynthesis</keyword>
<keyword id="KW-1185">Reference proteome</keyword>
<sequence length="699" mass="78398">MAREVPIEKLRNIGIVAHIDAGKTTTTERILYYTGKTYKIGEVHEGAATMDWMPQEKERGITITVATTACYWTRNGERYQINIIDTPGHVDFSVEVVRSMKVLDGIVFIFSAVEGVQPQSEANWRWADRFQVPRIAFINKMDRLGADFYRVFKEIEEKLTIKPVAIQIPLGAEDQFEGVIDLMEMKAIRWLEETLGAKYEVVDIPPEYQEKAQEWREKMIETIVETDDELMEKYLEGQEISIDELRKALRKATIERKLVPVLCGSAFKNKGVQPLLDAVIDYLPSPIDLPPVKGTNPKTGEEEVRHPSDDEPFCAYAFKVMSDPYAGQLTYIRVFSGTLKAGSYVYNATKDEKQRAGRLLLMHANSREEIQQVSAGEICAVVGLDAATGDTLCDEKHPIILEKLEFPDPVISMAIEPKTKKDQEKLSQVLNKFMKEDPTFRATTDPETGQILIHGMGELHLEIMVDRMKREYGIEVNVGKPQVAYKETIRKKAIGEGKFIKQTGGRGQYGHAIIEIEPLPRGAGFEFIDDIHGGVIPKEFIPSVEKGVKEAMQNGILAGYPVVDVRVRLFDGSYHEVDSSDIAFQVAGSLAFKDAAKKADPVLLEPIMEVEVETPEKYVGDVIGDLNSRRGKIMGMENKGVITVIKAHVPLAEMFGYATTLRSLTQGRGTFIMKFSHYDEVPQQIAEKIIGERMAGKSS</sequence>
<comment type="function">
    <text evidence="1">Catalyzes the GTP-dependent ribosomal translocation step during translation elongation. During this step, the ribosome changes from the pre-translocational (PRE) to the post-translocational (POST) state as the newly formed A-site-bound peptidyl-tRNA and P-site-bound deacylated tRNA move to the P and E sites, respectively. Catalyzes the coordinated movement of the two tRNA molecules, the mRNA and conformational changes in the ribosome (By similarity).</text>
</comment>
<comment type="subcellular location">
    <subcellularLocation>
        <location evidence="1">Cytoplasm</location>
    </subcellularLocation>
</comment>
<comment type="similarity">
    <text evidence="2">Belongs to the TRAFAC class translation factor GTPase superfamily. Classic translation factor GTPase family. EF-G/EF-2 subfamily.</text>
</comment>
<organism>
    <name type="scientific">Aquifex aeolicus (strain VF5)</name>
    <dbReference type="NCBI Taxonomy" id="224324"/>
    <lineage>
        <taxon>Bacteria</taxon>
        <taxon>Pseudomonadati</taxon>
        <taxon>Aquificota</taxon>
        <taxon>Aquificia</taxon>
        <taxon>Aquificales</taxon>
        <taxon>Aquificaceae</taxon>
        <taxon>Aquifex</taxon>
    </lineage>
</organism>
<gene>
    <name type="primary">fusA</name>
    <name type="ordered locus">aq_001</name>
</gene>
<feature type="chain" id="PRO_0000091058" description="Elongation factor G">
    <location>
        <begin position="1"/>
        <end position="699"/>
    </location>
</feature>
<feature type="domain" description="tr-type G">
    <location>
        <begin position="8"/>
        <end position="287"/>
    </location>
</feature>
<feature type="binding site" evidence="1">
    <location>
        <begin position="17"/>
        <end position="24"/>
    </location>
    <ligand>
        <name>GTP</name>
        <dbReference type="ChEBI" id="CHEBI:37565"/>
    </ligand>
</feature>
<feature type="binding site" evidence="1">
    <location>
        <begin position="85"/>
        <end position="89"/>
    </location>
    <ligand>
        <name>GTP</name>
        <dbReference type="ChEBI" id="CHEBI:37565"/>
    </ligand>
</feature>
<feature type="binding site" evidence="1">
    <location>
        <begin position="139"/>
        <end position="142"/>
    </location>
    <ligand>
        <name>GTP</name>
        <dbReference type="ChEBI" id="CHEBI:37565"/>
    </ligand>
</feature>
<reference key="1">
    <citation type="journal article" date="1998" name="Nature">
        <title>The complete genome of the hyperthermophilic bacterium Aquifex aeolicus.</title>
        <authorList>
            <person name="Deckert G."/>
            <person name="Warren P.V."/>
            <person name="Gaasterland T."/>
            <person name="Young W.G."/>
            <person name="Lenox A.L."/>
            <person name="Graham D.E."/>
            <person name="Overbeek R."/>
            <person name="Snead M.A."/>
            <person name="Keller M."/>
            <person name="Aujay M."/>
            <person name="Huber R."/>
            <person name="Feldman R.A."/>
            <person name="Short J.M."/>
            <person name="Olsen G.J."/>
            <person name="Swanson R.V."/>
        </authorList>
    </citation>
    <scope>NUCLEOTIDE SEQUENCE [LARGE SCALE GENOMIC DNA]</scope>
    <source>
        <strain>VF5</strain>
    </source>
</reference>
<evidence type="ECO:0000250" key="1"/>
<evidence type="ECO:0000305" key="2"/>
<name>EFG_AQUAE</name>